<proteinExistence type="inferred from homology"/>
<reference key="1">
    <citation type="journal article" date="2007" name="J. Bacteriol.">
        <title>Complete genome sequence of Haemophilus somnus (Histophilus somni) strain 129Pt and comparison to Haemophilus ducreyi 35000HP and Haemophilus influenzae Rd.</title>
        <authorList>
            <person name="Challacombe J.F."/>
            <person name="Duncan A.J."/>
            <person name="Brettin T.S."/>
            <person name="Bruce D."/>
            <person name="Chertkov O."/>
            <person name="Detter J.C."/>
            <person name="Han C.S."/>
            <person name="Misra M."/>
            <person name="Richardson P."/>
            <person name="Tapia R."/>
            <person name="Thayer N."/>
            <person name="Xie G."/>
            <person name="Inzana T.J."/>
        </authorList>
    </citation>
    <scope>NUCLEOTIDE SEQUENCE [LARGE SCALE GENOMIC DNA]</scope>
    <source>
        <strain>129Pt</strain>
    </source>
</reference>
<accession>Q0I148</accession>
<sequence length="130" mass="14045">MSMQDPIADMLTRIRNGQAANKVAISMPSSKLKVAIANVLAEEGYIANVKVSEGVKPELEITLKYFQGKPVVESIQRVSRPGLRIYKRKNELPKVMGGLGVAVVSTSKGIMTDRKARQAGLGGEIICYVA</sequence>
<evidence type="ECO:0000255" key="1">
    <source>
        <dbReference type="HAMAP-Rule" id="MF_01302"/>
    </source>
</evidence>
<evidence type="ECO:0000305" key="2"/>
<protein>
    <recommendedName>
        <fullName evidence="1">Small ribosomal subunit protein uS8</fullName>
    </recommendedName>
    <alternativeName>
        <fullName evidence="2">30S ribosomal protein S8</fullName>
    </alternativeName>
</protein>
<keyword id="KW-0687">Ribonucleoprotein</keyword>
<keyword id="KW-0689">Ribosomal protein</keyword>
<keyword id="KW-0694">RNA-binding</keyword>
<keyword id="KW-0699">rRNA-binding</keyword>
<name>RS8_HISS1</name>
<comment type="function">
    <text evidence="1">One of the primary rRNA binding proteins, it binds directly to 16S rRNA central domain where it helps coordinate assembly of the platform of the 30S subunit.</text>
</comment>
<comment type="subunit">
    <text evidence="1">Part of the 30S ribosomal subunit. Contacts proteins S5 and S12.</text>
</comment>
<comment type="similarity">
    <text evidence="1">Belongs to the universal ribosomal protein uS8 family.</text>
</comment>
<gene>
    <name evidence="1" type="primary">rpsH</name>
    <name type="ordered locus">HS_0074</name>
</gene>
<organism>
    <name type="scientific">Histophilus somni (strain 129Pt)</name>
    <name type="common">Haemophilus somnus</name>
    <dbReference type="NCBI Taxonomy" id="205914"/>
    <lineage>
        <taxon>Bacteria</taxon>
        <taxon>Pseudomonadati</taxon>
        <taxon>Pseudomonadota</taxon>
        <taxon>Gammaproteobacteria</taxon>
        <taxon>Pasteurellales</taxon>
        <taxon>Pasteurellaceae</taxon>
        <taxon>Histophilus</taxon>
    </lineage>
</organism>
<feature type="chain" id="PRO_0000290847" description="Small ribosomal subunit protein uS8">
    <location>
        <begin position="1"/>
        <end position="130"/>
    </location>
</feature>
<dbReference type="EMBL" id="CP000436">
    <property type="protein sequence ID" value="ABI24355.1"/>
    <property type="molecule type" value="Genomic_DNA"/>
</dbReference>
<dbReference type="SMR" id="Q0I148"/>
<dbReference type="KEGG" id="hso:HS_0074"/>
<dbReference type="eggNOG" id="COG0096">
    <property type="taxonomic scope" value="Bacteria"/>
</dbReference>
<dbReference type="HOGENOM" id="CLU_098428_0_0_6"/>
<dbReference type="GO" id="GO:1990904">
    <property type="term" value="C:ribonucleoprotein complex"/>
    <property type="evidence" value="ECO:0007669"/>
    <property type="project" value="UniProtKB-KW"/>
</dbReference>
<dbReference type="GO" id="GO:0005840">
    <property type="term" value="C:ribosome"/>
    <property type="evidence" value="ECO:0007669"/>
    <property type="project" value="UniProtKB-KW"/>
</dbReference>
<dbReference type="GO" id="GO:0019843">
    <property type="term" value="F:rRNA binding"/>
    <property type="evidence" value="ECO:0007669"/>
    <property type="project" value="UniProtKB-UniRule"/>
</dbReference>
<dbReference type="GO" id="GO:0003735">
    <property type="term" value="F:structural constituent of ribosome"/>
    <property type="evidence" value="ECO:0007669"/>
    <property type="project" value="InterPro"/>
</dbReference>
<dbReference type="GO" id="GO:0006412">
    <property type="term" value="P:translation"/>
    <property type="evidence" value="ECO:0007669"/>
    <property type="project" value="UniProtKB-UniRule"/>
</dbReference>
<dbReference type="FunFam" id="3.30.1370.30:FF:000003">
    <property type="entry name" value="30S ribosomal protein S8"/>
    <property type="match status" value="1"/>
</dbReference>
<dbReference type="FunFam" id="3.30.1490.10:FF:000001">
    <property type="entry name" value="30S ribosomal protein S8"/>
    <property type="match status" value="1"/>
</dbReference>
<dbReference type="Gene3D" id="3.30.1370.30">
    <property type="match status" value="1"/>
</dbReference>
<dbReference type="Gene3D" id="3.30.1490.10">
    <property type="match status" value="1"/>
</dbReference>
<dbReference type="HAMAP" id="MF_01302_B">
    <property type="entry name" value="Ribosomal_uS8_B"/>
    <property type="match status" value="1"/>
</dbReference>
<dbReference type="InterPro" id="IPR000630">
    <property type="entry name" value="Ribosomal_uS8"/>
</dbReference>
<dbReference type="InterPro" id="IPR047863">
    <property type="entry name" value="Ribosomal_uS8_CS"/>
</dbReference>
<dbReference type="InterPro" id="IPR035987">
    <property type="entry name" value="Ribosomal_uS8_sf"/>
</dbReference>
<dbReference type="NCBIfam" id="NF001109">
    <property type="entry name" value="PRK00136.1"/>
    <property type="match status" value="1"/>
</dbReference>
<dbReference type="PANTHER" id="PTHR11758">
    <property type="entry name" value="40S RIBOSOMAL PROTEIN S15A"/>
    <property type="match status" value="1"/>
</dbReference>
<dbReference type="Pfam" id="PF00410">
    <property type="entry name" value="Ribosomal_S8"/>
    <property type="match status" value="1"/>
</dbReference>
<dbReference type="SUPFAM" id="SSF56047">
    <property type="entry name" value="Ribosomal protein S8"/>
    <property type="match status" value="1"/>
</dbReference>
<dbReference type="PROSITE" id="PS00053">
    <property type="entry name" value="RIBOSOMAL_S8"/>
    <property type="match status" value="1"/>
</dbReference>